<gene>
    <name type="ordered locus">SaurJH9_2364</name>
</gene>
<protein>
    <recommendedName>
        <fullName evidence="1">UPF0060 membrane protein SaurJH9_2364</fullName>
    </recommendedName>
</protein>
<accession>A5IVC1</accession>
<organism>
    <name type="scientific">Staphylococcus aureus (strain JH9)</name>
    <dbReference type="NCBI Taxonomy" id="359786"/>
    <lineage>
        <taxon>Bacteria</taxon>
        <taxon>Bacillati</taxon>
        <taxon>Bacillota</taxon>
        <taxon>Bacilli</taxon>
        <taxon>Bacillales</taxon>
        <taxon>Staphylococcaceae</taxon>
        <taxon>Staphylococcus</taxon>
    </lineage>
</organism>
<reference key="1">
    <citation type="submission" date="2007-05" db="EMBL/GenBank/DDBJ databases">
        <title>Complete sequence of chromosome of Staphylococcus aureus subsp. aureus JH9.</title>
        <authorList>
            <consortium name="US DOE Joint Genome Institute"/>
            <person name="Copeland A."/>
            <person name="Lucas S."/>
            <person name="Lapidus A."/>
            <person name="Barry K."/>
            <person name="Detter J.C."/>
            <person name="Glavina del Rio T."/>
            <person name="Hammon N."/>
            <person name="Israni S."/>
            <person name="Pitluck S."/>
            <person name="Chain P."/>
            <person name="Malfatti S."/>
            <person name="Shin M."/>
            <person name="Vergez L."/>
            <person name="Schmutz J."/>
            <person name="Larimer F."/>
            <person name="Land M."/>
            <person name="Hauser L."/>
            <person name="Kyrpides N."/>
            <person name="Kim E."/>
            <person name="Tomasz A."/>
            <person name="Richardson P."/>
        </authorList>
    </citation>
    <scope>NUCLEOTIDE SEQUENCE [LARGE SCALE GENOMIC DNA]</scope>
    <source>
        <strain>JH9</strain>
    </source>
</reference>
<dbReference type="EMBL" id="CP000703">
    <property type="protein sequence ID" value="ABQ50144.1"/>
    <property type="molecule type" value="Genomic_DNA"/>
</dbReference>
<dbReference type="RefSeq" id="WP_000966695.1">
    <property type="nucleotide sequence ID" value="NC_009487.1"/>
</dbReference>
<dbReference type="SMR" id="A5IVC1"/>
<dbReference type="KEGG" id="saj:SaurJH9_2364"/>
<dbReference type="HOGENOM" id="CLU_117653_0_1_9"/>
<dbReference type="GO" id="GO:0005886">
    <property type="term" value="C:plasma membrane"/>
    <property type="evidence" value="ECO:0007669"/>
    <property type="project" value="UniProtKB-SubCell"/>
</dbReference>
<dbReference type="HAMAP" id="MF_00010">
    <property type="entry name" value="UPF0060"/>
    <property type="match status" value="1"/>
</dbReference>
<dbReference type="InterPro" id="IPR003844">
    <property type="entry name" value="UPF0060"/>
</dbReference>
<dbReference type="NCBIfam" id="NF002586">
    <property type="entry name" value="PRK02237.1"/>
    <property type="match status" value="1"/>
</dbReference>
<dbReference type="PANTHER" id="PTHR36116">
    <property type="entry name" value="UPF0060 MEMBRANE PROTEIN YNFA"/>
    <property type="match status" value="1"/>
</dbReference>
<dbReference type="PANTHER" id="PTHR36116:SF1">
    <property type="entry name" value="UPF0060 MEMBRANE PROTEIN YNFA"/>
    <property type="match status" value="1"/>
</dbReference>
<dbReference type="Pfam" id="PF02694">
    <property type="entry name" value="UPF0060"/>
    <property type="match status" value="1"/>
</dbReference>
<dbReference type="SUPFAM" id="SSF103481">
    <property type="entry name" value="Multidrug resistance efflux transporter EmrE"/>
    <property type="match status" value="1"/>
</dbReference>
<evidence type="ECO:0000255" key="1">
    <source>
        <dbReference type="HAMAP-Rule" id="MF_00010"/>
    </source>
</evidence>
<keyword id="KW-1003">Cell membrane</keyword>
<keyword id="KW-0472">Membrane</keyword>
<keyword id="KW-0812">Transmembrane</keyword>
<keyword id="KW-1133">Transmembrane helix</keyword>
<sequence length="108" mass="11758">MLYPIFIFILAGLCEIGGGYLIWLWLREGQSSLVGLIGGAILMLYGVIATFQSFPSFGRVYAAYGGVFIIMSLIFAMVVDKQMPDKYDVIGAIICIVGVLVMLLPSRA</sequence>
<proteinExistence type="inferred from homology"/>
<feature type="chain" id="PRO_1000073933" description="UPF0060 membrane protein SaurJH9_2364">
    <location>
        <begin position="1"/>
        <end position="108"/>
    </location>
</feature>
<feature type="transmembrane region" description="Helical" evidence="1">
    <location>
        <begin position="5"/>
        <end position="25"/>
    </location>
</feature>
<feature type="transmembrane region" description="Helical" evidence="1">
    <location>
        <begin position="31"/>
        <end position="51"/>
    </location>
</feature>
<feature type="transmembrane region" description="Helical" evidence="1">
    <location>
        <begin position="60"/>
        <end position="80"/>
    </location>
</feature>
<feature type="transmembrane region" description="Helical" evidence="1">
    <location>
        <begin position="86"/>
        <end position="106"/>
    </location>
</feature>
<name>Y2364_STAA9</name>
<comment type="subcellular location">
    <subcellularLocation>
        <location evidence="1">Cell membrane</location>
        <topology evidence="1">Multi-pass membrane protein</topology>
    </subcellularLocation>
</comment>
<comment type="similarity">
    <text evidence="1">Belongs to the UPF0060 family.</text>
</comment>